<keyword id="KW-0067">ATP-binding</keyword>
<keyword id="KW-0460">Magnesium</keyword>
<keyword id="KW-0547">Nucleotide-binding</keyword>
<keyword id="KW-1185">Reference proteome</keyword>
<keyword id="KW-0808">Transferase</keyword>
<keyword id="KW-0819">tRNA processing</keyword>
<reference key="1">
    <citation type="submission" date="2006-03" db="EMBL/GenBank/DDBJ databases">
        <title>Complete sequence of Shewanella denitrificans OS217.</title>
        <authorList>
            <consortium name="US DOE Joint Genome Institute"/>
            <person name="Copeland A."/>
            <person name="Lucas S."/>
            <person name="Lapidus A."/>
            <person name="Barry K."/>
            <person name="Detter J.C."/>
            <person name="Glavina del Rio T."/>
            <person name="Hammon N."/>
            <person name="Israni S."/>
            <person name="Dalin E."/>
            <person name="Tice H."/>
            <person name="Pitluck S."/>
            <person name="Brettin T."/>
            <person name="Bruce D."/>
            <person name="Han C."/>
            <person name="Tapia R."/>
            <person name="Gilna P."/>
            <person name="Kiss H."/>
            <person name="Schmutz J."/>
            <person name="Larimer F."/>
            <person name="Land M."/>
            <person name="Hauser L."/>
            <person name="Kyrpides N."/>
            <person name="Lykidis A."/>
            <person name="Richardson P."/>
        </authorList>
    </citation>
    <scope>NUCLEOTIDE SEQUENCE [LARGE SCALE GENOMIC DNA]</scope>
    <source>
        <strain>OS217 / ATCC BAA-1090 / DSM 15013</strain>
    </source>
</reference>
<dbReference type="EC" id="2.5.1.75" evidence="1"/>
<dbReference type="EMBL" id="CP000302">
    <property type="protein sequence ID" value="ABE56482.1"/>
    <property type="molecule type" value="Genomic_DNA"/>
</dbReference>
<dbReference type="SMR" id="Q12J94"/>
<dbReference type="STRING" id="318161.Sden_3206"/>
<dbReference type="KEGG" id="sdn:Sden_3206"/>
<dbReference type="eggNOG" id="COG0324">
    <property type="taxonomic scope" value="Bacteria"/>
</dbReference>
<dbReference type="HOGENOM" id="CLU_032616_0_0_6"/>
<dbReference type="Proteomes" id="UP000001982">
    <property type="component" value="Chromosome"/>
</dbReference>
<dbReference type="GO" id="GO:0005524">
    <property type="term" value="F:ATP binding"/>
    <property type="evidence" value="ECO:0007669"/>
    <property type="project" value="UniProtKB-UniRule"/>
</dbReference>
<dbReference type="GO" id="GO:0052381">
    <property type="term" value="F:tRNA dimethylallyltransferase activity"/>
    <property type="evidence" value="ECO:0007669"/>
    <property type="project" value="UniProtKB-UniRule"/>
</dbReference>
<dbReference type="GO" id="GO:0006400">
    <property type="term" value="P:tRNA modification"/>
    <property type="evidence" value="ECO:0007669"/>
    <property type="project" value="TreeGrafter"/>
</dbReference>
<dbReference type="FunFam" id="1.10.20.140:FF:000001">
    <property type="entry name" value="tRNA dimethylallyltransferase"/>
    <property type="match status" value="1"/>
</dbReference>
<dbReference type="Gene3D" id="1.10.20.140">
    <property type="match status" value="1"/>
</dbReference>
<dbReference type="Gene3D" id="3.40.50.300">
    <property type="entry name" value="P-loop containing nucleotide triphosphate hydrolases"/>
    <property type="match status" value="1"/>
</dbReference>
<dbReference type="HAMAP" id="MF_00185">
    <property type="entry name" value="IPP_trans"/>
    <property type="match status" value="1"/>
</dbReference>
<dbReference type="InterPro" id="IPR039657">
    <property type="entry name" value="Dimethylallyltransferase"/>
</dbReference>
<dbReference type="InterPro" id="IPR018022">
    <property type="entry name" value="IPT"/>
</dbReference>
<dbReference type="InterPro" id="IPR027417">
    <property type="entry name" value="P-loop_NTPase"/>
</dbReference>
<dbReference type="NCBIfam" id="TIGR00174">
    <property type="entry name" value="miaA"/>
    <property type="match status" value="1"/>
</dbReference>
<dbReference type="PANTHER" id="PTHR11088">
    <property type="entry name" value="TRNA DIMETHYLALLYLTRANSFERASE"/>
    <property type="match status" value="1"/>
</dbReference>
<dbReference type="PANTHER" id="PTHR11088:SF60">
    <property type="entry name" value="TRNA DIMETHYLALLYLTRANSFERASE"/>
    <property type="match status" value="1"/>
</dbReference>
<dbReference type="Pfam" id="PF01715">
    <property type="entry name" value="IPPT"/>
    <property type="match status" value="1"/>
</dbReference>
<dbReference type="SUPFAM" id="SSF52540">
    <property type="entry name" value="P-loop containing nucleoside triphosphate hydrolases"/>
    <property type="match status" value="1"/>
</dbReference>
<sequence>MFLMGPTASGKTALAIEMAQKHNCEIISVDSALIYKQMDIGTAKPNAAELALAPHKLIDILDPSESYSAADFRRDALIEIEAIIKRGKTPLLVGGTMMYFKALLEGLSPLPSADETIRQQIQTRADIEGWEALHQSLCEIDPVAGARIHPNDPQRLSRALEVYYISGKTMTELTQTKSAALPYEVVQFAIAPLDRKVLHELIAKRFTIMLEQGFVEEVNSLMARGDLHLDLPSMRCVGYRQCWQYLEGEFDYDTMVEKATAATRQLAKRQLTWLRGWPDVHWLESGAESNLVTLQRQRG</sequence>
<protein>
    <recommendedName>
        <fullName evidence="1">tRNA dimethylallyltransferase</fullName>
        <ecNumber evidence="1">2.5.1.75</ecNumber>
    </recommendedName>
    <alternativeName>
        <fullName evidence="1">Dimethylallyl diphosphate:tRNA dimethylallyltransferase</fullName>
        <shortName evidence="1">DMAPP:tRNA dimethylallyltransferase</shortName>
        <shortName evidence="1">DMATase</shortName>
    </alternativeName>
    <alternativeName>
        <fullName evidence="1">Isopentenyl-diphosphate:tRNA isopentenyltransferase</fullName>
        <shortName evidence="1">IPP transferase</shortName>
        <shortName evidence="1">IPPT</shortName>
        <shortName evidence="1">IPTase</shortName>
    </alternativeName>
</protein>
<proteinExistence type="inferred from homology"/>
<comment type="function">
    <text evidence="1">Catalyzes the transfer of a dimethylallyl group onto the adenine at position 37 in tRNAs that read codons beginning with uridine, leading to the formation of N6-(dimethylallyl)adenosine (i(6)A).</text>
</comment>
<comment type="catalytic activity">
    <reaction evidence="1">
        <text>adenosine(37) in tRNA + dimethylallyl diphosphate = N(6)-dimethylallyladenosine(37) in tRNA + diphosphate</text>
        <dbReference type="Rhea" id="RHEA:26482"/>
        <dbReference type="Rhea" id="RHEA-COMP:10162"/>
        <dbReference type="Rhea" id="RHEA-COMP:10375"/>
        <dbReference type="ChEBI" id="CHEBI:33019"/>
        <dbReference type="ChEBI" id="CHEBI:57623"/>
        <dbReference type="ChEBI" id="CHEBI:74411"/>
        <dbReference type="ChEBI" id="CHEBI:74415"/>
        <dbReference type="EC" id="2.5.1.75"/>
    </reaction>
</comment>
<comment type="cofactor">
    <cofactor evidence="1">
        <name>Mg(2+)</name>
        <dbReference type="ChEBI" id="CHEBI:18420"/>
    </cofactor>
</comment>
<comment type="subunit">
    <text evidence="1">Monomer.</text>
</comment>
<comment type="similarity">
    <text evidence="1">Belongs to the IPP transferase family.</text>
</comment>
<gene>
    <name evidence="1" type="primary">miaA</name>
    <name type="ordered locus">Sden_3206</name>
</gene>
<name>MIAA_SHEDO</name>
<organism>
    <name type="scientific">Shewanella denitrificans (strain OS217 / ATCC BAA-1090 / DSM 15013)</name>
    <dbReference type="NCBI Taxonomy" id="318161"/>
    <lineage>
        <taxon>Bacteria</taxon>
        <taxon>Pseudomonadati</taxon>
        <taxon>Pseudomonadota</taxon>
        <taxon>Gammaproteobacteria</taxon>
        <taxon>Alteromonadales</taxon>
        <taxon>Shewanellaceae</taxon>
        <taxon>Shewanella</taxon>
    </lineage>
</organism>
<evidence type="ECO:0000255" key="1">
    <source>
        <dbReference type="HAMAP-Rule" id="MF_00185"/>
    </source>
</evidence>
<feature type="chain" id="PRO_0000377312" description="tRNA dimethylallyltransferase">
    <location>
        <begin position="1"/>
        <end position="299"/>
    </location>
</feature>
<feature type="region of interest" description="Interaction with substrate tRNA" evidence="1">
    <location>
        <begin position="30"/>
        <end position="33"/>
    </location>
</feature>
<feature type="region of interest" description="Interaction with substrate tRNA" evidence="1">
    <location>
        <begin position="154"/>
        <end position="158"/>
    </location>
</feature>
<feature type="region of interest" description="Interaction with substrate tRNA" evidence="1">
    <location>
        <begin position="235"/>
        <end position="240"/>
    </location>
</feature>
<feature type="binding site" evidence="1">
    <location>
        <begin position="5"/>
        <end position="12"/>
    </location>
    <ligand>
        <name>ATP</name>
        <dbReference type="ChEBI" id="CHEBI:30616"/>
    </ligand>
</feature>
<feature type="binding site" evidence="1">
    <location>
        <begin position="7"/>
        <end position="12"/>
    </location>
    <ligand>
        <name>substrate</name>
    </ligand>
</feature>
<feature type="site" description="Interaction with substrate tRNA" evidence="1">
    <location>
        <position position="96"/>
    </location>
</feature>
<feature type="site" description="Interaction with substrate tRNA" evidence="1">
    <location>
        <position position="118"/>
    </location>
</feature>
<accession>Q12J94</accession>